<organismHost>
    <name type="scientific">Equus asinus</name>
    <name type="common">Donkey</name>
    <name type="synonym">Equus africanus asinus</name>
    <dbReference type="NCBI Taxonomy" id="9793"/>
</organismHost>
<organismHost>
    <name type="scientific">Equus caballus</name>
    <name type="common">Horse</name>
    <dbReference type="NCBI Taxonomy" id="9796"/>
</organismHost>
<organism>
    <name type="scientific">Equine infectious anemia virus (isolate 1369)</name>
    <name type="common">EIAV</name>
    <dbReference type="NCBI Taxonomy" id="11670"/>
    <lineage>
        <taxon>Viruses</taxon>
        <taxon>Riboviria</taxon>
        <taxon>Pararnavirae</taxon>
        <taxon>Artverviricota</taxon>
        <taxon>Revtraviricetes</taxon>
        <taxon>Ortervirales</taxon>
        <taxon>Retroviridae</taxon>
        <taxon>Orthoretrovirinae</taxon>
        <taxon>Lentivirus</taxon>
        <taxon>Equine infectious anemia virus</taxon>
    </lineage>
</organism>
<gene>
    <name type="primary">gag</name>
</gene>
<name>GAG_EIAV9</name>
<sequence>MGDPLTWSKALKKLEKVTVQGSQKLTTGNCNWALSLVDLFHDTNFVKEKDWQLRDVIPLLEDVTQTLSGQEREAFERTWWAISAVKMGLQINNVVDGKASFQLLRAKYEKKTANKKQSEPSEEYPIMIDGAGNRNFRPLTPRGYTTWVNTIQTNGLLNEASQNLFGILSVDCTSEEMNAFLDVVPGQAGQKQILLDAIDKIADDWDNRHPLPNAPLVAPPQGPIPMTARFIRGLGVPRERQMEPAFDQFRQTYRQWIIEAMSEGIKVMIGKPKAQNIRQGAKEPYPEFVDRLLSQIKSEGHPQEISKFLTDTLTIQNANEECRNAMRHLRPEDTLEEKMYACRDIGTTKQKMMLLAKALQTGLAGPFKGGALKGGPLKAAQTCYNCGKPGHLSSQCRAPKVCFKCKQPGHFSKQCRSVPKNGKQGAQGRPQKQTFPIQQKSQHNKSVVQETPQTQNLYPDLSEIKKEYNVKEKDQVEDLNLDSLWE</sequence>
<proteinExistence type="evidence at protein level"/>
<accession>P69730</accession>
<accession>P03351</accession>
<comment type="function">
    <text evidence="1">Matrix protein p15 forms the outer shell of the core of the virus, lining the inner surface of the viral membrane.</text>
</comment>
<comment type="function">
    <text evidence="1">Capsid protein p26 forms the conical core of the virus that encapsulates the genomic RNA-nucleocapsid complex.</text>
</comment>
<comment type="function">
    <text evidence="1">Nucleocapsid protein p11 encapsulates and protects viral dimeric unspliced (genomic) RNA. Binds these RNAs through its zinc fingers (By similarity).</text>
</comment>
<comment type="function">
    <text>p9 plays a role in budding of the assembled particle by interacting with PDCD6IP/AIP1.</text>
</comment>
<comment type="subunit">
    <molecule>p9</molecule>
    <text evidence="5">Interacts with human PDCD6IP/AIP1.</text>
</comment>
<comment type="interaction">
    <interactant intactId="EBI-1220941">
        <id>P69730</id>
    </interactant>
    <interactant intactId="EBI-310624">
        <id>Q8WUM4</id>
        <label>PDCD6IP</label>
    </interactant>
    <organismsDiffer>true</organismsDiffer>
    <experiments>2</experiments>
</comment>
<comment type="subcellular location">
    <subcellularLocation>
        <location evidence="6">Virion</location>
    </subcellularLocation>
</comment>
<comment type="domain">
    <text>Late-budding domains (L domains) are short sequence motifs essential for viral particle budding. They recruit proteins of the host ESCRT machinery (Endosomal Sorting Complex Required for Transport) or ESCRT-associated proteins. p9 contains one L domain: a LYPX(n)L motif, which interacts with PDCD6IP/AIP1.</text>
</comment>
<comment type="similarity">
    <text evidence="6">Belongs to the equine lentivirus group gag polyprotein family.</text>
</comment>
<evidence type="ECO:0000250" key="1"/>
<evidence type="ECO:0000255" key="2"/>
<evidence type="ECO:0000255" key="3">
    <source>
        <dbReference type="PROSITE-ProRule" id="PRU00047"/>
    </source>
</evidence>
<evidence type="ECO:0000256" key="4">
    <source>
        <dbReference type="SAM" id="MobiDB-lite"/>
    </source>
</evidence>
<evidence type="ECO:0000269" key="5">
    <source>
    </source>
</evidence>
<evidence type="ECO:0000305" key="6"/>
<protein>
    <recommendedName>
        <fullName>Gag polyprotein</fullName>
    </recommendedName>
    <component>
        <recommendedName>
            <fullName>Matrix protein p15</fullName>
            <shortName>MA</shortName>
        </recommendedName>
    </component>
    <component>
        <recommendedName>
            <fullName>Capsid protein p26</fullName>
            <shortName>CA</shortName>
        </recommendedName>
    </component>
    <component>
        <recommendedName>
            <fullName>p1</fullName>
        </recommendedName>
    </component>
    <component>
        <recommendedName>
            <fullName>Nucleocapsid protein p11</fullName>
            <shortName>NC</shortName>
        </recommendedName>
    </component>
    <component>
        <recommendedName>
            <fullName>p9</fullName>
        </recommendedName>
    </component>
</protein>
<dbReference type="EMBL" id="M16575">
    <property type="protein sequence ID" value="AAB59861.1"/>
    <property type="molecule type" value="Genomic_RNA"/>
</dbReference>
<dbReference type="PIR" id="A03949">
    <property type="entry name" value="FOLJEV"/>
</dbReference>
<dbReference type="RefSeq" id="NP_056901.1">
    <property type="nucleotide sequence ID" value="NC_001450.1"/>
</dbReference>
<dbReference type="PDB" id="6T61">
    <property type="method" value="EM"/>
    <property type="resolution" value="3.70 A"/>
    <property type="chains" value="A/B/C/D/E/F/G/H/I/J/K/L/M/N/O/P/Q/R=1-486"/>
</dbReference>
<dbReference type="PDB" id="6T63">
    <property type="method" value="EM"/>
    <property type="resolution" value="3.80 A"/>
    <property type="chains" value="A/B/C/D/E/F/G/H/I/J/K/L/M/N/O/P/Q/R=1-486"/>
</dbReference>
<dbReference type="PDB" id="6T64">
    <property type="method" value="EM"/>
    <property type="resolution" value="3.70 A"/>
    <property type="chains" value="A/B/C=1-486"/>
</dbReference>
<dbReference type="PDBsum" id="6T61"/>
<dbReference type="PDBsum" id="6T63"/>
<dbReference type="PDBsum" id="6T64"/>
<dbReference type="BMRB" id="P69730"/>
<dbReference type="EMDB" id="EMD-10381"/>
<dbReference type="EMDB" id="EMD-10383"/>
<dbReference type="EMDB" id="EMD-10384"/>
<dbReference type="SMR" id="P69730"/>
<dbReference type="IntAct" id="P69730">
    <property type="interactions" value="1"/>
</dbReference>
<dbReference type="GeneID" id="1489984"/>
<dbReference type="KEGG" id="vg:1489984"/>
<dbReference type="GO" id="GO:0019013">
    <property type="term" value="C:viral nucleocapsid"/>
    <property type="evidence" value="ECO:0007669"/>
    <property type="project" value="UniProtKB-KW"/>
</dbReference>
<dbReference type="GO" id="GO:0003676">
    <property type="term" value="F:nucleic acid binding"/>
    <property type="evidence" value="ECO:0007669"/>
    <property type="project" value="InterPro"/>
</dbReference>
<dbReference type="GO" id="GO:0039660">
    <property type="term" value="F:structural constituent of virion"/>
    <property type="evidence" value="ECO:0007669"/>
    <property type="project" value="UniProtKB-KW"/>
</dbReference>
<dbReference type="GO" id="GO:0008270">
    <property type="term" value="F:zinc ion binding"/>
    <property type="evidence" value="ECO:0007669"/>
    <property type="project" value="UniProtKB-KW"/>
</dbReference>
<dbReference type="GO" id="GO:0039702">
    <property type="term" value="P:viral budding via host ESCRT complex"/>
    <property type="evidence" value="ECO:0007669"/>
    <property type="project" value="UniProtKB-KW"/>
</dbReference>
<dbReference type="Gene3D" id="1.10.1200.30">
    <property type="match status" value="1"/>
</dbReference>
<dbReference type="Gene3D" id="1.10.375.10">
    <property type="entry name" value="Human Immunodeficiency Virus Type 1 Capsid Protein"/>
    <property type="match status" value="1"/>
</dbReference>
<dbReference type="Gene3D" id="1.10.150.90">
    <property type="entry name" value="Immunodeficiency lentiviruses, gag gene matrix protein p17"/>
    <property type="match status" value="1"/>
</dbReference>
<dbReference type="Gene3D" id="4.10.60.10">
    <property type="entry name" value="Zinc finger, CCHC-type"/>
    <property type="match status" value="2"/>
</dbReference>
<dbReference type="InterPro" id="IPR014834">
    <property type="entry name" value="Gag_p15"/>
</dbReference>
<dbReference type="InterPro" id="IPR045345">
    <property type="entry name" value="Gag_p24_C"/>
</dbReference>
<dbReference type="InterPro" id="IPR012344">
    <property type="entry name" value="Matrix_HIV/RSV_N"/>
</dbReference>
<dbReference type="InterPro" id="IPR050195">
    <property type="entry name" value="Primate_lentivir_Gag_pol-like"/>
</dbReference>
<dbReference type="InterPro" id="IPR008916">
    <property type="entry name" value="Retrov_capsid_C"/>
</dbReference>
<dbReference type="InterPro" id="IPR008919">
    <property type="entry name" value="Retrov_capsid_N"/>
</dbReference>
<dbReference type="InterPro" id="IPR010999">
    <property type="entry name" value="Retrovr_matrix"/>
</dbReference>
<dbReference type="InterPro" id="IPR001878">
    <property type="entry name" value="Znf_CCHC"/>
</dbReference>
<dbReference type="InterPro" id="IPR036875">
    <property type="entry name" value="Znf_CCHC_sf"/>
</dbReference>
<dbReference type="PANTHER" id="PTHR40389">
    <property type="entry name" value="ENDOGENOUS RETROVIRUS GROUP K MEMBER 24 GAG POLYPROTEIN-RELATED"/>
    <property type="match status" value="1"/>
</dbReference>
<dbReference type="PANTHER" id="PTHR40389:SF2">
    <property type="entry name" value="ENDOGENOUS RETROVIRUS GROUP K MEMBER 24 GAG POLYPROTEIN-RELATED"/>
    <property type="match status" value="1"/>
</dbReference>
<dbReference type="Pfam" id="PF08723">
    <property type="entry name" value="Gag_p15"/>
    <property type="match status" value="1"/>
</dbReference>
<dbReference type="Pfam" id="PF19317">
    <property type="entry name" value="Gag_p24_C"/>
    <property type="match status" value="1"/>
</dbReference>
<dbReference type="Pfam" id="PF00098">
    <property type="entry name" value="zf-CCHC"/>
    <property type="match status" value="2"/>
</dbReference>
<dbReference type="SMART" id="SM00343">
    <property type="entry name" value="ZnF_C2HC"/>
    <property type="match status" value="2"/>
</dbReference>
<dbReference type="SUPFAM" id="SSF47836">
    <property type="entry name" value="Retroviral matrix proteins"/>
    <property type="match status" value="1"/>
</dbReference>
<dbReference type="SUPFAM" id="SSF47353">
    <property type="entry name" value="Retrovirus capsid dimerization domain-like"/>
    <property type="match status" value="1"/>
</dbReference>
<dbReference type="SUPFAM" id="SSF47943">
    <property type="entry name" value="Retrovirus capsid protein, N-terminal core domain"/>
    <property type="match status" value="1"/>
</dbReference>
<dbReference type="SUPFAM" id="SSF57756">
    <property type="entry name" value="Retrovirus zinc finger-like domains"/>
    <property type="match status" value="1"/>
</dbReference>
<dbReference type="PROSITE" id="PS50158">
    <property type="entry name" value="ZF_CCHC"/>
    <property type="match status" value="2"/>
</dbReference>
<feature type="chain" id="PRO_0000038772" description="Matrix protein p15" evidence="1">
    <location>
        <begin position="1"/>
        <end position="124"/>
    </location>
</feature>
<feature type="chain" id="PRO_0000038773" description="Capsid protein p26" evidence="1">
    <location>
        <begin position="125"/>
        <end position="354"/>
    </location>
</feature>
<feature type="peptide" id="PRO_0000272313" description="p1" evidence="2">
    <location>
        <begin position="355"/>
        <end position="359"/>
    </location>
</feature>
<feature type="chain" id="PRO_0000038774" description="Nucleocapsid protein p11" evidence="1">
    <location>
        <begin position="360"/>
        <end position="435"/>
    </location>
</feature>
<feature type="chain" id="PRO_0000038775" description="p9" evidence="1">
    <location>
        <begin position="436"/>
        <end position="486"/>
    </location>
</feature>
<feature type="zinc finger region" description="CCHC-type 1" evidence="3">
    <location>
        <begin position="381"/>
        <end position="398"/>
    </location>
</feature>
<feature type="zinc finger region" description="CCHC-type 2" evidence="3">
    <location>
        <begin position="400"/>
        <end position="417"/>
    </location>
</feature>
<feature type="region of interest" description="Disordered" evidence="4">
    <location>
        <begin position="414"/>
        <end position="460"/>
    </location>
</feature>
<feature type="short sequence motif" description="LYPX(n)L motif">
    <location>
        <begin position="457"/>
        <end position="461"/>
    </location>
</feature>
<feature type="compositionally biased region" description="Polar residues" evidence="4">
    <location>
        <begin position="430"/>
        <end position="457"/>
    </location>
</feature>
<feature type="disulfide bond" evidence="1">
    <location>
        <begin position="322"/>
        <end position="342"/>
    </location>
</feature>
<keyword id="KW-0002">3D-structure</keyword>
<keyword id="KW-0167">Capsid protein</keyword>
<keyword id="KW-1015">Disulfide bond</keyword>
<keyword id="KW-0945">Host-virus interaction</keyword>
<keyword id="KW-0479">Metal-binding</keyword>
<keyword id="KW-0677">Repeat</keyword>
<keyword id="KW-1198">Viral budding</keyword>
<keyword id="KW-1187">Viral budding via the host ESCRT complexes</keyword>
<keyword id="KW-0468">Viral matrix protein</keyword>
<keyword id="KW-0543">Viral nucleoprotein</keyword>
<keyword id="KW-1188">Viral release from host cell</keyword>
<keyword id="KW-0946">Virion</keyword>
<keyword id="KW-0862">Zinc</keyword>
<keyword id="KW-0863">Zinc-finger</keyword>
<reference key="1">
    <citation type="journal article" date="1987" name="Virology">
        <title>Nucleotide sequence analysis of equine infectious anemia virus proviral DNA.</title>
        <authorList>
            <person name="Kawakami T."/>
            <person name="Sherman L."/>
            <person name="Dahlberg J."/>
            <person name="Gazit A."/>
            <person name="Yaniv A."/>
            <person name="Tronick S.R."/>
            <person name="Aaronson S.A."/>
        </authorList>
    </citation>
    <scope>NUCLEOTIDE SEQUENCE [GENOMIC RNA]</scope>
</reference>
<reference key="2">
    <citation type="journal article" date="2003" name="Cell">
        <title>AIP1/ALIX is a binding partner for HIV-1 p6 and EIAV p9 functioning in virus budding.</title>
        <authorList>
            <person name="Strack B."/>
            <person name="Calistri A."/>
            <person name="Craig S."/>
            <person name="Popova E."/>
            <person name="Goettlinger H.G."/>
        </authorList>
    </citation>
    <scope>INTERACTION OF P9 WITH HUMAN PDCD6IP/AIP1</scope>
</reference>